<feature type="chain" id="PRO_0000353573" description="DNA-directed RNA polymerase subunit beta''">
    <location>
        <begin position="1"/>
        <end position="2617"/>
    </location>
</feature>
<feature type="binding site" evidence="1">
    <location>
        <position position="263"/>
    </location>
    <ligand>
        <name>Zn(2+)</name>
        <dbReference type="ChEBI" id="CHEBI:29105"/>
    </ligand>
</feature>
<feature type="binding site" evidence="1">
    <location>
        <position position="334"/>
    </location>
    <ligand>
        <name>Zn(2+)</name>
        <dbReference type="ChEBI" id="CHEBI:29105"/>
    </ligand>
</feature>
<feature type="binding site" evidence="1">
    <location>
        <position position="341"/>
    </location>
    <ligand>
        <name>Zn(2+)</name>
        <dbReference type="ChEBI" id="CHEBI:29105"/>
    </ligand>
</feature>
<feature type="binding site" evidence="1">
    <location>
        <position position="344"/>
    </location>
    <ligand>
        <name>Zn(2+)</name>
        <dbReference type="ChEBI" id="CHEBI:29105"/>
    </ligand>
</feature>
<geneLocation type="chloroplast"/>
<evidence type="ECO:0000255" key="1">
    <source>
        <dbReference type="HAMAP-Rule" id="MF_01324"/>
    </source>
</evidence>
<gene>
    <name evidence="1" type="primary">rpoC2</name>
</gene>
<organism>
    <name type="scientific">Oedogonium cardiacum</name>
    <name type="common">Filamentous green alga</name>
    <dbReference type="NCBI Taxonomy" id="55995"/>
    <lineage>
        <taxon>Eukaryota</taxon>
        <taxon>Viridiplantae</taxon>
        <taxon>Chlorophyta</taxon>
        <taxon>core chlorophytes</taxon>
        <taxon>Chlorophyceae</taxon>
        <taxon>OCC clade</taxon>
        <taxon>Oedogoniales</taxon>
        <taxon>Oedogoniaceae</taxon>
        <taxon>Oedogonium</taxon>
    </lineage>
</organism>
<accession>B2X1Z4</accession>
<sequence>MKILFFMIQIKNRNKLNNKNDFIINQIEKKNTQIIITKTLKKNFKNVKLNYYWNQTFDKNRLKNFIFWCLKNYGQNKTIKVLEILKYLGFKYATKAGLSLSIDDLIIPPTKSKLLIEAELTTRTAMLQYKNAQITNLERFQQIIETWHITSEKMKDDMIYHFKTTNIFNPLYMMAFSGARGNVSQVRQLVGMRGLMANPQGQILDFPIQSNFREGLTLTEYVISCYGARKGVVDTALRTANAGYLTRRLVDVAQHVIISNFDCGTHRGIIISEMKQGNKLLFSLRQRLLGRVLAKDVKSGDLLIAKKNQEISDHLSEIIASIVKTVIIRSPLTCKTTQFICQLCYGWSLAEGRLVGVGETVGIIAAQSIGEPGTQLTMRTFHTGGVFAGELLDQLIAPFDGIIKYNIYIPGNMIRTPQGKIAFLTRIDSQLIIQSCSNLNNQKYYTIPPYTILFIRNMETVSKNQLIAQLCSFSPSLKNSSDLIEYKIYSDLEGEIKSTNFKILKKVTEMRDIMYQSLEWGYIWILSGKIYQLPFHSIDNLKLQYTFQQKNNFFPIKGDFLTNSSILSQILWINNLENVRLNFKQKHIFYQKFIKNSYNYTCINNSNQIQMKWLKKWQKLSEISTFLNLNKSIKTFKSNFNMDLSKENRLINIYSQNLLLFLTIDKIRYKKFGYFIFFQNNLKNRSLRNIKNSIKQNKEIVVNFNYLKKNSLKHFIFDHKFFIPISLESTDFVNKENSLITSPRFFYQKLSNRFFEWFFNQENQIGSGLIQLSEIFVFKKNLQKEISKKNQIRKKQEKNVKLKYHSLTLKKKKGLSNQFYTYNCMNSYSSETRYFPHTSCFLNHFNNEKINKYLNTNYSLIFFYFRPFIQCEKQQLSQFHYINNKKYFDNLSLLLKPTIIASKKKQIRVNMKNTYEYLNQKIYDLKKQLIKNKLFQKIGKYESNKFFRLISNHIKKYQIIKKTNTHTIERVNVTKFKLVYNSGIDNFNKRNYFINHKKKRYLKTYISFHPLNFFNKIFNHGNFLLKKKFYYKLQLIMLCKNNNDKFNSMCQVRCNSFFTTLSTNFLTKKIFFDFNFDKTHKKDFFLKKNDFISFSFFNKFSNIFISFSKSPTNYIDDTHNFMNSYKYISNEFFYLNWSNIVNKHKIFKEYVFKNNFNKSKEMQNIKNLKKLHSSFTYYIIKNQFRFAPSFQKQSINELENIYKKEINQVSDTYNCIIKHRLLCINQLNNNFLSYLTYVKLYEFNIYKKSPINTLIKLNLDTYNCMNDKFNIQKFINQIENKKNGLDNQKKCNKNMKKIFYLQILLNQLRKFYNYLFNKKTQKLLFKNNNYKQKNIEKDILNNNTILNSIYYKKCVPILLIKYKKIQITMNTRSLHTIYIFNNFLIRKPSRKKNSIFVNKKISLINNQKTHSLLKMYLIKMHSLNNLVINAYFQSVSFKWLKKQTDRSLRKKRIFNQIFLKRLEFAKFINKNLIISHEKMQPTVLDFSDKLNSSQQTENKKIKTLNKKRLYKNNISKIANEILFLYSRFLLIPKEYSTISKKQLSFLFFHPQQHLHCINPFYKILETRTLYELWNSNNLSFFHKSVFFTKKKFISNRKLKLKRTLKLLTLKNYLNFKKIDSYNCMCIVSTNNYLQKINTFIFNLFHNLFHTYFQLFKNNRQGNYIPLKYNNYYGIFQLNKKNPKRDFSKFKYIQQKYYPDKNLFYLSEKSSIFLNKNWQLYKNKKEFLLTSQPGWICKPIKKTHTINVDSDFLSNYSLHSITQLLKKNLKLYNQNYINYFKSIPVSYRFCERNLIWFNFTFLKMIELVKKFFKDTYNCMNPLLFLPFFHSFSNFIRYNENFKNIKTSNSKKIKKNGWLINKKSRFLKMKKSNMFFCLKKTTNKIDNIFLFVEGQEFIINNYQNLSYISDTNLLCLSKKKLFKMSEKQYKSKSLRNNNGLIWKSQYNSIFLNKQKISQKLIFKFPNLETTFEQYLGIPFNKISKTFNKENNIKISYDINRKMRTYTYNYINYRNFPSNHIQQYSEINQILTKSNSFNLINKNYKIFKSQKSLNTFRHFLGFSIPITFDFSFQSSHIFWNYYPNYNLSNLKLDKRKKSMEFFNYLILKNKLLNLNIIKVKKSRHVLLYEDSINFINIFNSIEMLLRQPCINWSTTKKINLGYQKNIFLAPTKTFLLLSLENSSVTNNPIALTEIFSNMEGEILYSLKNKKNHPPFHYPLKSGDKNKFEFNEFLQKYDRSIFLTKSDQICLKFKNEIYLNNELAFLKKFNVFKNQKHIRGLKTFQIKSSKQIFLIFKILQKIHNNCQFSNQSIKIKLGLFLFQGDLLNTFFRNSNINNNTFNCVSIIKNKKTTKIQKNYKRSIVCVVNHSGQIIHLNQHKLTLRKGQPIFFSPHCIFHSYNSDFIEQNKPVLSLPYQQLKTGDIVQGIPKIEQLFEARLTFAGKLEYDNLTNILEIIFQTYKNKLTLKLAVRRSIELVQMIIVNSIQRIYRSQGVNISDKHLEVIVKQMTKKVEIIDSGQSGFLIGEHFDLDVVELWNSKLSKIKHVKYKPLILGISKASLQTDSFLSAASFQYTTRILSQSAFFKKRDFLKGLKENIIVGNIIPAGTGYLGHIEDLFETS</sequence>
<comment type="function">
    <text evidence="1">DNA-dependent RNA polymerase catalyzes the transcription of DNA into RNA using the four ribonucleoside triphosphates as substrates.</text>
</comment>
<comment type="catalytic activity">
    <reaction evidence="1">
        <text>RNA(n) + a ribonucleoside 5'-triphosphate = RNA(n+1) + diphosphate</text>
        <dbReference type="Rhea" id="RHEA:21248"/>
        <dbReference type="Rhea" id="RHEA-COMP:14527"/>
        <dbReference type="Rhea" id="RHEA-COMP:17342"/>
        <dbReference type="ChEBI" id="CHEBI:33019"/>
        <dbReference type="ChEBI" id="CHEBI:61557"/>
        <dbReference type="ChEBI" id="CHEBI:140395"/>
        <dbReference type="EC" id="2.7.7.6"/>
    </reaction>
</comment>
<comment type="cofactor">
    <cofactor evidence="1">
        <name>Zn(2+)</name>
        <dbReference type="ChEBI" id="CHEBI:29105"/>
    </cofactor>
    <text evidence="1">Binds 1 Zn(2+) ion per subunit.</text>
</comment>
<comment type="subunit">
    <text evidence="1">In plastids the minimal PEP RNA polymerase catalytic core is composed of four subunits: alpha, beta, beta', and beta''. When a (nuclear-encoded) sigma factor is associated with the core the holoenzyme is formed, which can initiate transcription.</text>
</comment>
<comment type="subcellular location">
    <subcellularLocation>
        <location evidence="1">Plastid</location>
        <location evidence="1">Chloroplast</location>
    </subcellularLocation>
</comment>
<comment type="similarity">
    <text evidence="1">Belongs to the RNA polymerase beta' chain family. RpoC2 subfamily.</text>
</comment>
<reference key="1">
    <citation type="journal article" date="2008" name="J. Phycol.">
        <title>Deep division in the Chlorophyceae (Chlorophyta) revealed by chloroplast phylogenomic analyseS.</title>
        <authorList>
            <person name="Turmel M."/>
            <person name="Brouard J.-S."/>
            <person name="Gagnon C."/>
            <person name="Otis C."/>
            <person name="Lemieux C."/>
        </authorList>
        <dbReference type="AGRICOLA" id="IND44059346"/>
    </citation>
    <scope>NUCLEOTIDE SEQUENCE [GENOMIC DNA]</scope>
    <source>
        <strain>SAG 575-1b / CCAP 575/1B / UTEX LB 40</strain>
    </source>
</reference>
<reference key="2">
    <citation type="journal article" date="2008" name="BMC Genomics">
        <title>Chloroplast DNA sequence of the green alga Oedogonium cardiacum (Chlorophyceae): unique genome architecture, derived characters shared with the Chaetophorales and novel genes acquired through horizontal transfer.</title>
        <authorList>
            <person name="Brouard J.-S."/>
            <person name="Otis C."/>
            <person name="Lemieux C."/>
            <person name="Turmel M."/>
        </authorList>
    </citation>
    <scope>NUCLEOTIDE SEQUENCE [LARGE SCALE GENOMIC DNA]</scope>
    <source>
        <strain>SAG 575-1b / CCAP 575/1B / UTEX LB 40</strain>
    </source>
</reference>
<name>RPOC2_OEDCA</name>
<proteinExistence type="inferred from homology"/>
<protein>
    <recommendedName>
        <fullName evidence="1">DNA-directed RNA polymerase subunit beta''</fullName>
        <ecNumber evidence="1">2.7.7.6</ecNumber>
    </recommendedName>
    <alternativeName>
        <fullName evidence="1">PEP</fullName>
    </alternativeName>
    <alternativeName>
        <fullName evidence="1">Plastid-encoded RNA polymerase subunit beta''</fullName>
        <shortName evidence="1">RNA polymerase subunit beta''</shortName>
    </alternativeName>
</protein>
<keyword id="KW-0150">Chloroplast</keyword>
<keyword id="KW-0240">DNA-directed RNA polymerase</keyword>
<keyword id="KW-0479">Metal-binding</keyword>
<keyword id="KW-0548">Nucleotidyltransferase</keyword>
<keyword id="KW-0934">Plastid</keyword>
<keyword id="KW-0804">Transcription</keyword>
<keyword id="KW-0808">Transferase</keyword>
<keyword id="KW-0862">Zinc</keyword>
<dbReference type="EC" id="2.7.7.6" evidence="1"/>
<dbReference type="EMBL" id="EF587367">
    <property type="protein sequence ID" value="ABU88207.1"/>
    <property type="molecule type" value="Genomic_DNA"/>
</dbReference>
<dbReference type="EMBL" id="EU677193">
    <property type="protein sequence ID" value="ACC97250.1"/>
    <property type="molecule type" value="Genomic_DNA"/>
</dbReference>
<dbReference type="RefSeq" id="YP_002000445.1">
    <property type="nucleotide sequence ID" value="NC_011031.1"/>
</dbReference>
<dbReference type="GeneID" id="6440045"/>
<dbReference type="GO" id="GO:0009507">
    <property type="term" value="C:chloroplast"/>
    <property type="evidence" value="ECO:0007669"/>
    <property type="project" value="UniProtKB-SubCell"/>
</dbReference>
<dbReference type="GO" id="GO:0000428">
    <property type="term" value="C:DNA-directed RNA polymerase complex"/>
    <property type="evidence" value="ECO:0007669"/>
    <property type="project" value="UniProtKB-KW"/>
</dbReference>
<dbReference type="GO" id="GO:0005739">
    <property type="term" value="C:mitochondrion"/>
    <property type="evidence" value="ECO:0007669"/>
    <property type="project" value="GOC"/>
</dbReference>
<dbReference type="GO" id="GO:0003677">
    <property type="term" value="F:DNA binding"/>
    <property type="evidence" value="ECO:0007669"/>
    <property type="project" value="UniProtKB-UniRule"/>
</dbReference>
<dbReference type="GO" id="GO:0003899">
    <property type="term" value="F:DNA-directed RNA polymerase activity"/>
    <property type="evidence" value="ECO:0007669"/>
    <property type="project" value="UniProtKB-UniRule"/>
</dbReference>
<dbReference type="GO" id="GO:0008270">
    <property type="term" value="F:zinc ion binding"/>
    <property type="evidence" value="ECO:0007669"/>
    <property type="project" value="UniProtKB-UniRule"/>
</dbReference>
<dbReference type="GO" id="GO:0006351">
    <property type="term" value="P:DNA-templated transcription"/>
    <property type="evidence" value="ECO:0007669"/>
    <property type="project" value="UniProtKB-UniRule"/>
</dbReference>
<dbReference type="CDD" id="cd02655">
    <property type="entry name" value="RNAP_beta'_C"/>
    <property type="match status" value="1"/>
</dbReference>
<dbReference type="Gene3D" id="1.10.132.30">
    <property type="match status" value="1"/>
</dbReference>
<dbReference type="Gene3D" id="1.10.150.390">
    <property type="match status" value="1"/>
</dbReference>
<dbReference type="Gene3D" id="1.10.1790.20">
    <property type="match status" value="1"/>
</dbReference>
<dbReference type="Gene3D" id="1.10.274.100">
    <property type="entry name" value="RNA polymerase Rpb1, domain 3"/>
    <property type="match status" value="1"/>
</dbReference>
<dbReference type="HAMAP" id="MF_01324">
    <property type="entry name" value="RNApol_bact_RpoC2"/>
    <property type="match status" value="1"/>
</dbReference>
<dbReference type="InterPro" id="IPR012756">
    <property type="entry name" value="DNA-dir_RpoC2_beta_pp"/>
</dbReference>
<dbReference type="InterPro" id="IPR045867">
    <property type="entry name" value="DNA-dir_RpoC_beta_prime"/>
</dbReference>
<dbReference type="InterPro" id="IPR042102">
    <property type="entry name" value="RNA_pol_Rpb1_3_sf"/>
</dbReference>
<dbReference type="InterPro" id="IPR007083">
    <property type="entry name" value="RNA_pol_Rpb1_4"/>
</dbReference>
<dbReference type="InterPro" id="IPR007081">
    <property type="entry name" value="RNA_pol_Rpb1_5"/>
</dbReference>
<dbReference type="InterPro" id="IPR038120">
    <property type="entry name" value="Rpb1_funnel_sf"/>
</dbReference>
<dbReference type="NCBIfam" id="TIGR02388">
    <property type="entry name" value="rpoC2_cyan"/>
    <property type="match status" value="1"/>
</dbReference>
<dbReference type="PANTHER" id="PTHR19376">
    <property type="entry name" value="DNA-DIRECTED RNA POLYMERASE"/>
    <property type="match status" value="1"/>
</dbReference>
<dbReference type="PANTHER" id="PTHR19376:SF68">
    <property type="entry name" value="DNA-DIRECTED RNA POLYMERASE SUBUNIT BETA"/>
    <property type="match status" value="1"/>
</dbReference>
<dbReference type="Pfam" id="PF05000">
    <property type="entry name" value="RNA_pol_Rpb1_4"/>
    <property type="match status" value="1"/>
</dbReference>
<dbReference type="Pfam" id="PF04998">
    <property type="entry name" value="RNA_pol_Rpb1_5"/>
    <property type="match status" value="2"/>
</dbReference>
<dbReference type="SUPFAM" id="SSF64484">
    <property type="entry name" value="beta and beta-prime subunits of DNA dependent RNA-polymerase"/>
    <property type="match status" value="2"/>
</dbReference>